<sequence>MNRTLQPDSGASQTAPTAHQARAFAPASVANVAVGFDLLGYPMDQVGDTVTVRRIDTPQVRIAAIRGIAQPLPLQTERNTAGAALLSMHRDLALPFGFELEIDKGIPLSSGMGGSAASCVAALLAANALLDEPLRREHLYRYALDGEAVASGSRHGDNLGPLFLGGLVLCTLERLVPVTVPTAWHSLLVHPDTLLETRRAREVLKEPYLLPDIVTQSANLALVLAGCYHSDAELVRAGLRDVLIEPRRAPLIAGFTAAQQAALQADAMGASISGAGPSVFAWFQTRSAAEAAAPAVRAAFTAAGFDSQAWVTPLTSPGARLL</sequence>
<dbReference type="EC" id="2.7.1.39" evidence="1"/>
<dbReference type="EMBL" id="CP001011">
    <property type="protein sequence ID" value="ACB92775.1"/>
    <property type="molecule type" value="Genomic_DNA"/>
</dbReference>
<dbReference type="RefSeq" id="WP_004083414.1">
    <property type="nucleotide sequence ID" value="NC_010577.1"/>
</dbReference>
<dbReference type="SMR" id="B2I5Y6"/>
<dbReference type="KEGG" id="xfn:XfasM23_1357"/>
<dbReference type="HOGENOM" id="CLU_041243_1_1_6"/>
<dbReference type="UniPathway" id="UPA00050">
    <property type="reaction ID" value="UER00064"/>
</dbReference>
<dbReference type="Proteomes" id="UP000001698">
    <property type="component" value="Chromosome"/>
</dbReference>
<dbReference type="GO" id="GO:0005737">
    <property type="term" value="C:cytoplasm"/>
    <property type="evidence" value="ECO:0007669"/>
    <property type="project" value="UniProtKB-SubCell"/>
</dbReference>
<dbReference type="GO" id="GO:0005524">
    <property type="term" value="F:ATP binding"/>
    <property type="evidence" value="ECO:0007669"/>
    <property type="project" value="UniProtKB-UniRule"/>
</dbReference>
<dbReference type="GO" id="GO:0004413">
    <property type="term" value="F:homoserine kinase activity"/>
    <property type="evidence" value="ECO:0007669"/>
    <property type="project" value="UniProtKB-UniRule"/>
</dbReference>
<dbReference type="GO" id="GO:0009088">
    <property type="term" value="P:threonine biosynthetic process"/>
    <property type="evidence" value="ECO:0007669"/>
    <property type="project" value="UniProtKB-UniRule"/>
</dbReference>
<dbReference type="Gene3D" id="3.30.230.10">
    <property type="match status" value="1"/>
</dbReference>
<dbReference type="Gene3D" id="3.30.70.890">
    <property type="entry name" value="GHMP kinase, C-terminal domain"/>
    <property type="match status" value="1"/>
</dbReference>
<dbReference type="HAMAP" id="MF_00384">
    <property type="entry name" value="Homoser_kinase"/>
    <property type="match status" value="1"/>
</dbReference>
<dbReference type="InterPro" id="IPR013750">
    <property type="entry name" value="GHMP_kinase_C_dom"/>
</dbReference>
<dbReference type="InterPro" id="IPR036554">
    <property type="entry name" value="GHMP_kinase_C_sf"/>
</dbReference>
<dbReference type="InterPro" id="IPR006204">
    <property type="entry name" value="GHMP_kinase_N_dom"/>
</dbReference>
<dbReference type="InterPro" id="IPR000870">
    <property type="entry name" value="Homoserine_kinase"/>
</dbReference>
<dbReference type="InterPro" id="IPR020568">
    <property type="entry name" value="Ribosomal_Su5_D2-typ_SF"/>
</dbReference>
<dbReference type="InterPro" id="IPR014721">
    <property type="entry name" value="Ribsml_uS5_D2-typ_fold_subgr"/>
</dbReference>
<dbReference type="NCBIfam" id="NF002288">
    <property type="entry name" value="PRK01212.1-4"/>
    <property type="match status" value="1"/>
</dbReference>
<dbReference type="NCBIfam" id="TIGR00191">
    <property type="entry name" value="thrB"/>
    <property type="match status" value="1"/>
</dbReference>
<dbReference type="PANTHER" id="PTHR20861:SF1">
    <property type="entry name" value="HOMOSERINE KINASE"/>
    <property type="match status" value="1"/>
</dbReference>
<dbReference type="PANTHER" id="PTHR20861">
    <property type="entry name" value="HOMOSERINE/4-DIPHOSPHOCYTIDYL-2-C-METHYL-D-ERYTHRITOL KINASE"/>
    <property type="match status" value="1"/>
</dbReference>
<dbReference type="Pfam" id="PF08544">
    <property type="entry name" value="GHMP_kinases_C"/>
    <property type="match status" value="1"/>
</dbReference>
<dbReference type="Pfam" id="PF00288">
    <property type="entry name" value="GHMP_kinases_N"/>
    <property type="match status" value="1"/>
</dbReference>
<dbReference type="PIRSF" id="PIRSF000676">
    <property type="entry name" value="Homoser_kin"/>
    <property type="match status" value="1"/>
</dbReference>
<dbReference type="PRINTS" id="PR00958">
    <property type="entry name" value="HOMSERKINASE"/>
</dbReference>
<dbReference type="SUPFAM" id="SSF55060">
    <property type="entry name" value="GHMP Kinase, C-terminal domain"/>
    <property type="match status" value="1"/>
</dbReference>
<dbReference type="SUPFAM" id="SSF54211">
    <property type="entry name" value="Ribosomal protein S5 domain 2-like"/>
    <property type="match status" value="1"/>
</dbReference>
<reference key="1">
    <citation type="journal article" date="2010" name="J. Bacteriol.">
        <title>Whole genome sequences of two Xylella fastidiosa strains (M12 and M23) causing almond leaf scorch disease in California.</title>
        <authorList>
            <person name="Chen J."/>
            <person name="Xie G."/>
            <person name="Han S."/>
            <person name="Chertkov O."/>
            <person name="Sims D."/>
            <person name="Civerolo E.L."/>
        </authorList>
    </citation>
    <scope>NUCLEOTIDE SEQUENCE [LARGE SCALE GENOMIC DNA]</scope>
    <source>
        <strain>M23</strain>
    </source>
</reference>
<comment type="function">
    <text evidence="1">Catalyzes the ATP-dependent phosphorylation of L-homoserine to L-homoserine phosphate.</text>
</comment>
<comment type="catalytic activity">
    <reaction evidence="1">
        <text>L-homoserine + ATP = O-phospho-L-homoserine + ADP + H(+)</text>
        <dbReference type="Rhea" id="RHEA:13985"/>
        <dbReference type="ChEBI" id="CHEBI:15378"/>
        <dbReference type="ChEBI" id="CHEBI:30616"/>
        <dbReference type="ChEBI" id="CHEBI:57476"/>
        <dbReference type="ChEBI" id="CHEBI:57590"/>
        <dbReference type="ChEBI" id="CHEBI:456216"/>
        <dbReference type="EC" id="2.7.1.39"/>
    </reaction>
</comment>
<comment type="pathway">
    <text evidence="1">Amino-acid biosynthesis; L-threonine biosynthesis; L-threonine from L-aspartate: step 4/5.</text>
</comment>
<comment type="subcellular location">
    <subcellularLocation>
        <location evidence="1">Cytoplasm</location>
    </subcellularLocation>
</comment>
<comment type="similarity">
    <text evidence="1">Belongs to the GHMP kinase family. Homoserine kinase subfamily.</text>
</comment>
<keyword id="KW-0028">Amino-acid biosynthesis</keyword>
<keyword id="KW-0067">ATP-binding</keyword>
<keyword id="KW-0963">Cytoplasm</keyword>
<keyword id="KW-0418">Kinase</keyword>
<keyword id="KW-0547">Nucleotide-binding</keyword>
<keyword id="KW-0791">Threonine biosynthesis</keyword>
<keyword id="KW-0808">Transferase</keyword>
<accession>B2I5Y6</accession>
<evidence type="ECO:0000255" key="1">
    <source>
        <dbReference type="HAMAP-Rule" id="MF_00384"/>
    </source>
</evidence>
<gene>
    <name evidence="1" type="primary">thrB</name>
    <name type="ordered locus">XfasM23_1357</name>
</gene>
<organism>
    <name type="scientific">Xylella fastidiosa (strain M23)</name>
    <dbReference type="NCBI Taxonomy" id="405441"/>
    <lineage>
        <taxon>Bacteria</taxon>
        <taxon>Pseudomonadati</taxon>
        <taxon>Pseudomonadota</taxon>
        <taxon>Gammaproteobacteria</taxon>
        <taxon>Lysobacterales</taxon>
        <taxon>Lysobacteraceae</taxon>
        <taxon>Xylella</taxon>
    </lineage>
</organism>
<proteinExistence type="inferred from homology"/>
<protein>
    <recommendedName>
        <fullName evidence="1">Homoserine kinase</fullName>
        <shortName evidence="1">HK</shortName>
        <shortName evidence="1">HSK</shortName>
        <ecNumber evidence="1">2.7.1.39</ecNumber>
    </recommendedName>
</protein>
<name>KHSE_XYLF2</name>
<feature type="chain" id="PRO_1000122452" description="Homoserine kinase">
    <location>
        <begin position="1"/>
        <end position="322"/>
    </location>
</feature>
<feature type="binding site" evidence="1">
    <location>
        <begin position="107"/>
        <end position="117"/>
    </location>
    <ligand>
        <name>ATP</name>
        <dbReference type="ChEBI" id="CHEBI:30616"/>
    </ligand>
</feature>